<name>HEM3_CHRVO</name>
<evidence type="ECO:0000255" key="1">
    <source>
        <dbReference type="HAMAP-Rule" id="MF_00260"/>
    </source>
</evidence>
<evidence type="ECO:0000305" key="2"/>
<sequence>MDKIVIASRESRLAMWQAEHIQARLQALYPHLTVEILGMTTQGDQILDKTLSKIGGKGLFVKELEQALMDGRADLAVHSLKDVPMTLPDGFALAAVCEREDPRDAFVSNRYQHLSELPAGSVVGTSSLRREAQLRARFPQLAVKPLRGNVQTRLKKLDDGEFDAIILAAAGLKRLGLAERIQGELAPSESLPAAGQGALGIEIRADRADLSALLAPLNHPDTRACTAAERALAKELGGSCQVPLGAFATLADGTLTLGGLVAHPDGSVVLTASASGPADYADALGRAVAKKLIDAGARPLIAAVLAEPR</sequence>
<reference key="1">
    <citation type="journal article" date="2003" name="Proc. Natl. Acad. Sci. U.S.A.">
        <title>The complete genome sequence of Chromobacterium violaceum reveals remarkable and exploitable bacterial adaptability.</title>
        <authorList>
            <person name="Vasconcelos A.T.R."/>
            <person name="de Almeida D.F."/>
            <person name="Hungria M."/>
            <person name="Guimaraes C.T."/>
            <person name="Antonio R.V."/>
            <person name="Almeida F.C."/>
            <person name="de Almeida L.G.P."/>
            <person name="de Almeida R."/>
            <person name="Alves-Gomes J.A."/>
            <person name="Andrade E.M."/>
            <person name="Araripe J."/>
            <person name="de Araujo M.F.F."/>
            <person name="Astolfi-Filho S."/>
            <person name="Azevedo V."/>
            <person name="Baptista A.J."/>
            <person name="Bataus L.A.M."/>
            <person name="Batista J.S."/>
            <person name="Belo A."/>
            <person name="van den Berg C."/>
            <person name="Bogo M."/>
            <person name="Bonatto S."/>
            <person name="Bordignon J."/>
            <person name="Brigido M.M."/>
            <person name="Brito C.A."/>
            <person name="Brocchi M."/>
            <person name="Burity H.A."/>
            <person name="Camargo A.A."/>
            <person name="Cardoso D.D.P."/>
            <person name="Carneiro N.P."/>
            <person name="Carraro D.M."/>
            <person name="Carvalho C.M.B."/>
            <person name="Cascardo J.C.M."/>
            <person name="Cavada B.S."/>
            <person name="Chueire L.M.O."/>
            <person name="Creczynski-Pasa T.B."/>
            <person name="Cunha-Junior N.C."/>
            <person name="Fagundes N."/>
            <person name="Falcao C.L."/>
            <person name="Fantinatti F."/>
            <person name="Farias I.P."/>
            <person name="Felipe M.S.S."/>
            <person name="Ferrari L.P."/>
            <person name="Ferro J.A."/>
            <person name="Ferro M.I.T."/>
            <person name="Franco G.R."/>
            <person name="Freitas N.S.A."/>
            <person name="Furlan L.R."/>
            <person name="Gazzinelli R.T."/>
            <person name="Gomes E.A."/>
            <person name="Goncalves P.R."/>
            <person name="Grangeiro T.B."/>
            <person name="Grattapaglia D."/>
            <person name="Grisard E.C."/>
            <person name="Hanna E.S."/>
            <person name="Jardim S.N."/>
            <person name="Laurino J."/>
            <person name="Leoi L.C.T."/>
            <person name="Lima L.F.A."/>
            <person name="Loureiro M.F."/>
            <person name="Lyra M.C.C.P."/>
            <person name="Madeira H.M.F."/>
            <person name="Manfio G.P."/>
            <person name="Maranhao A.Q."/>
            <person name="Martins W.S."/>
            <person name="di Mauro S.M.Z."/>
            <person name="de Medeiros S.R.B."/>
            <person name="Meissner R.V."/>
            <person name="Moreira M.A.M."/>
            <person name="Nascimento F.F."/>
            <person name="Nicolas M.F."/>
            <person name="Oliveira J.G."/>
            <person name="Oliveira S.C."/>
            <person name="Paixao R.F.C."/>
            <person name="Parente J.A."/>
            <person name="Pedrosa F.O."/>
            <person name="Pena S.D.J."/>
            <person name="Pereira J.O."/>
            <person name="Pereira M."/>
            <person name="Pinto L.S.R.C."/>
            <person name="Pinto L.S."/>
            <person name="Porto J.I.R."/>
            <person name="Potrich D.P."/>
            <person name="Ramalho-Neto C.E."/>
            <person name="Reis A.M.M."/>
            <person name="Rigo L.U."/>
            <person name="Rondinelli E."/>
            <person name="Santos E.B.P."/>
            <person name="Santos F.R."/>
            <person name="Schneider M.P.C."/>
            <person name="Seuanez H.N."/>
            <person name="Silva A.M.R."/>
            <person name="da Silva A.L.C."/>
            <person name="Silva D.W."/>
            <person name="Silva R."/>
            <person name="Simoes I.C."/>
            <person name="Simon D."/>
            <person name="Soares C.M.A."/>
            <person name="Soares R.B.A."/>
            <person name="Souza E.M."/>
            <person name="Souza K.R.L."/>
            <person name="Souza R.C."/>
            <person name="Steffens M.B.R."/>
            <person name="Steindel M."/>
            <person name="Teixeira S.R."/>
            <person name="Urmenyi T."/>
            <person name="Vettore A."/>
            <person name="Wassem R."/>
            <person name="Zaha A."/>
            <person name="Simpson A.J.G."/>
        </authorList>
    </citation>
    <scope>NUCLEOTIDE SEQUENCE [LARGE SCALE GENOMIC DNA]</scope>
    <source>
        <strain>ATCC 12472 / DSM 30191 / JCM 1249 / CCUG 213 / NBRC 12614 / NCIMB 9131 / NCTC 9757 / MK</strain>
    </source>
</reference>
<accession>Q7P207</accession>
<gene>
    <name evidence="1" type="primary">hemC</name>
    <name type="ordered locus">CV_0054</name>
</gene>
<comment type="function">
    <text evidence="1">Tetrapolymerization of the monopyrrole PBG into the hydroxymethylbilane pre-uroporphyrinogen in several discrete steps.</text>
</comment>
<comment type="catalytic activity">
    <reaction evidence="1">
        <text>4 porphobilinogen + H2O = hydroxymethylbilane + 4 NH4(+)</text>
        <dbReference type="Rhea" id="RHEA:13185"/>
        <dbReference type="ChEBI" id="CHEBI:15377"/>
        <dbReference type="ChEBI" id="CHEBI:28938"/>
        <dbReference type="ChEBI" id="CHEBI:57845"/>
        <dbReference type="ChEBI" id="CHEBI:58126"/>
        <dbReference type="EC" id="2.5.1.61"/>
    </reaction>
</comment>
<comment type="cofactor">
    <cofactor evidence="1">
        <name>dipyrromethane</name>
        <dbReference type="ChEBI" id="CHEBI:60342"/>
    </cofactor>
    <text evidence="1">Binds 1 dipyrromethane group covalently.</text>
</comment>
<comment type="pathway">
    <text evidence="1">Porphyrin-containing compound metabolism; protoporphyrin-IX biosynthesis; coproporphyrinogen-III from 5-aminolevulinate: step 2/4.</text>
</comment>
<comment type="subunit">
    <text evidence="1">Monomer.</text>
</comment>
<comment type="miscellaneous">
    <text evidence="1">The porphobilinogen subunits are added to the dipyrromethane group.</text>
</comment>
<comment type="similarity">
    <text evidence="1">Belongs to the HMBS family.</text>
</comment>
<comment type="sequence caution" evidence="2">
    <conflict type="erroneous initiation">
        <sequence resource="EMBL-CDS" id="AAQ57734"/>
    </conflict>
</comment>
<feature type="chain" id="PRO_0000142924" description="Porphobilinogen deaminase">
    <location>
        <begin position="1"/>
        <end position="309"/>
    </location>
</feature>
<feature type="modified residue" description="S-(dipyrrolylmethanemethyl)cysteine" evidence="1">
    <location>
        <position position="240"/>
    </location>
</feature>
<protein>
    <recommendedName>
        <fullName evidence="1">Porphobilinogen deaminase</fullName>
        <shortName evidence="1">PBG</shortName>
        <ecNumber evidence="1">2.5.1.61</ecNumber>
    </recommendedName>
    <alternativeName>
        <fullName evidence="1">Hydroxymethylbilane synthase</fullName>
        <shortName evidence="1">HMBS</shortName>
    </alternativeName>
    <alternativeName>
        <fullName evidence="1">Pre-uroporphyrinogen synthase</fullName>
    </alternativeName>
</protein>
<dbReference type="EC" id="2.5.1.61" evidence="1"/>
<dbReference type="EMBL" id="AE016825">
    <property type="protein sequence ID" value="AAQ57734.1"/>
    <property type="status" value="ALT_INIT"/>
    <property type="molecule type" value="Genomic_DNA"/>
</dbReference>
<dbReference type="RefSeq" id="WP_011133609.1">
    <property type="nucleotide sequence ID" value="NC_005085.1"/>
</dbReference>
<dbReference type="SMR" id="Q7P207"/>
<dbReference type="STRING" id="243365.CV_0054"/>
<dbReference type="GeneID" id="66366051"/>
<dbReference type="KEGG" id="cvi:CV_0054"/>
<dbReference type="eggNOG" id="COG0181">
    <property type="taxonomic scope" value="Bacteria"/>
</dbReference>
<dbReference type="HOGENOM" id="CLU_019704_0_2_4"/>
<dbReference type="OrthoDB" id="9810298at2"/>
<dbReference type="UniPathway" id="UPA00251">
    <property type="reaction ID" value="UER00319"/>
</dbReference>
<dbReference type="Proteomes" id="UP000001424">
    <property type="component" value="Chromosome"/>
</dbReference>
<dbReference type="GO" id="GO:0005737">
    <property type="term" value="C:cytoplasm"/>
    <property type="evidence" value="ECO:0007669"/>
    <property type="project" value="TreeGrafter"/>
</dbReference>
<dbReference type="GO" id="GO:0004418">
    <property type="term" value="F:hydroxymethylbilane synthase activity"/>
    <property type="evidence" value="ECO:0007669"/>
    <property type="project" value="UniProtKB-UniRule"/>
</dbReference>
<dbReference type="GO" id="GO:0006782">
    <property type="term" value="P:protoporphyrinogen IX biosynthetic process"/>
    <property type="evidence" value="ECO:0007669"/>
    <property type="project" value="UniProtKB-UniRule"/>
</dbReference>
<dbReference type="CDD" id="cd13646">
    <property type="entry name" value="PBP2_EcHMBS_like"/>
    <property type="match status" value="1"/>
</dbReference>
<dbReference type="FunFam" id="3.30.160.40:FF:000001">
    <property type="entry name" value="Porphobilinogen deaminase"/>
    <property type="match status" value="1"/>
</dbReference>
<dbReference type="FunFam" id="3.40.190.10:FF:000004">
    <property type="entry name" value="Porphobilinogen deaminase"/>
    <property type="match status" value="1"/>
</dbReference>
<dbReference type="FunFam" id="3.40.190.10:FF:000005">
    <property type="entry name" value="Porphobilinogen deaminase"/>
    <property type="match status" value="1"/>
</dbReference>
<dbReference type="Gene3D" id="3.40.190.10">
    <property type="entry name" value="Periplasmic binding protein-like II"/>
    <property type="match status" value="2"/>
</dbReference>
<dbReference type="Gene3D" id="3.30.160.40">
    <property type="entry name" value="Porphobilinogen deaminase, C-terminal domain"/>
    <property type="match status" value="1"/>
</dbReference>
<dbReference type="HAMAP" id="MF_00260">
    <property type="entry name" value="Porphobil_deam"/>
    <property type="match status" value="1"/>
</dbReference>
<dbReference type="InterPro" id="IPR000860">
    <property type="entry name" value="HemC"/>
</dbReference>
<dbReference type="InterPro" id="IPR022419">
    <property type="entry name" value="Porphobilin_deaminase_cofac_BS"/>
</dbReference>
<dbReference type="InterPro" id="IPR022417">
    <property type="entry name" value="Porphobilin_deaminase_N"/>
</dbReference>
<dbReference type="InterPro" id="IPR022418">
    <property type="entry name" value="Porphobilinogen_deaminase_C"/>
</dbReference>
<dbReference type="InterPro" id="IPR036803">
    <property type="entry name" value="Porphobilinogen_deaminase_C_sf"/>
</dbReference>
<dbReference type="NCBIfam" id="TIGR00212">
    <property type="entry name" value="hemC"/>
    <property type="match status" value="1"/>
</dbReference>
<dbReference type="PANTHER" id="PTHR11557">
    <property type="entry name" value="PORPHOBILINOGEN DEAMINASE"/>
    <property type="match status" value="1"/>
</dbReference>
<dbReference type="PANTHER" id="PTHR11557:SF0">
    <property type="entry name" value="PORPHOBILINOGEN DEAMINASE"/>
    <property type="match status" value="1"/>
</dbReference>
<dbReference type="Pfam" id="PF01379">
    <property type="entry name" value="Porphobil_deam"/>
    <property type="match status" value="1"/>
</dbReference>
<dbReference type="Pfam" id="PF03900">
    <property type="entry name" value="Porphobil_deamC"/>
    <property type="match status" value="1"/>
</dbReference>
<dbReference type="PIRSF" id="PIRSF001438">
    <property type="entry name" value="4pyrrol_synth_OHMeBilane_synth"/>
    <property type="match status" value="1"/>
</dbReference>
<dbReference type="PRINTS" id="PR00151">
    <property type="entry name" value="PORPHBDMNASE"/>
</dbReference>
<dbReference type="SUPFAM" id="SSF53850">
    <property type="entry name" value="Periplasmic binding protein-like II"/>
    <property type="match status" value="1"/>
</dbReference>
<dbReference type="SUPFAM" id="SSF54782">
    <property type="entry name" value="Porphobilinogen deaminase (hydroxymethylbilane synthase), C-terminal domain"/>
    <property type="match status" value="1"/>
</dbReference>
<dbReference type="PROSITE" id="PS00533">
    <property type="entry name" value="PORPHOBILINOGEN_DEAM"/>
    <property type="match status" value="1"/>
</dbReference>
<organism>
    <name type="scientific">Chromobacterium violaceum (strain ATCC 12472 / DSM 30191 / JCM 1249 / CCUG 213 / NBRC 12614 / NCIMB 9131 / NCTC 9757 / MK)</name>
    <dbReference type="NCBI Taxonomy" id="243365"/>
    <lineage>
        <taxon>Bacteria</taxon>
        <taxon>Pseudomonadati</taxon>
        <taxon>Pseudomonadota</taxon>
        <taxon>Betaproteobacteria</taxon>
        <taxon>Neisseriales</taxon>
        <taxon>Chromobacteriaceae</taxon>
        <taxon>Chromobacterium</taxon>
    </lineage>
</organism>
<proteinExistence type="inferred from homology"/>
<keyword id="KW-0627">Porphyrin biosynthesis</keyword>
<keyword id="KW-1185">Reference proteome</keyword>
<keyword id="KW-0808">Transferase</keyword>